<evidence type="ECO:0000250" key="1"/>
<evidence type="ECO:0000255" key="2">
    <source>
        <dbReference type="PROSITE-ProRule" id="PRU00056"/>
    </source>
</evidence>
<evidence type="ECO:0000255" key="3">
    <source>
        <dbReference type="PROSITE-ProRule" id="PRU00172"/>
    </source>
</evidence>
<evidence type="ECO:0000256" key="4">
    <source>
        <dbReference type="SAM" id="MobiDB-lite"/>
    </source>
</evidence>
<evidence type="ECO:0000269" key="5">
    <source>
    </source>
</evidence>
<evidence type="ECO:0000305" key="6"/>
<gene>
    <name type="primary">Arhgap8</name>
</gene>
<proteinExistence type="evidence at transcript level"/>
<keyword id="KW-0343">GTPase activation</keyword>
<keyword id="KW-1185">Reference proteome</keyword>
<name>RHG08_MOUSE</name>
<reference key="1">
    <citation type="journal article" date="2005" name="Science">
        <title>The transcriptional landscape of the mammalian genome.</title>
        <authorList>
            <person name="Carninci P."/>
            <person name="Kasukawa T."/>
            <person name="Katayama S."/>
            <person name="Gough J."/>
            <person name="Frith M.C."/>
            <person name="Maeda N."/>
            <person name="Oyama R."/>
            <person name="Ravasi T."/>
            <person name="Lenhard B."/>
            <person name="Wells C."/>
            <person name="Kodzius R."/>
            <person name="Shimokawa K."/>
            <person name="Bajic V.B."/>
            <person name="Brenner S.E."/>
            <person name="Batalov S."/>
            <person name="Forrest A.R."/>
            <person name="Zavolan M."/>
            <person name="Davis M.J."/>
            <person name="Wilming L.G."/>
            <person name="Aidinis V."/>
            <person name="Allen J.E."/>
            <person name="Ambesi-Impiombato A."/>
            <person name="Apweiler R."/>
            <person name="Aturaliya R.N."/>
            <person name="Bailey T.L."/>
            <person name="Bansal M."/>
            <person name="Baxter L."/>
            <person name="Beisel K.W."/>
            <person name="Bersano T."/>
            <person name="Bono H."/>
            <person name="Chalk A.M."/>
            <person name="Chiu K.P."/>
            <person name="Choudhary V."/>
            <person name="Christoffels A."/>
            <person name="Clutterbuck D.R."/>
            <person name="Crowe M.L."/>
            <person name="Dalla E."/>
            <person name="Dalrymple B.P."/>
            <person name="de Bono B."/>
            <person name="Della Gatta G."/>
            <person name="di Bernardo D."/>
            <person name="Down T."/>
            <person name="Engstrom P."/>
            <person name="Fagiolini M."/>
            <person name="Faulkner G."/>
            <person name="Fletcher C.F."/>
            <person name="Fukushima T."/>
            <person name="Furuno M."/>
            <person name="Futaki S."/>
            <person name="Gariboldi M."/>
            <person name="Georgii-Hemming P."/>
            <person name="Gingeras T.R."/>
            <person name="Gojobori T."/>
            <person name="Green R.E."/>
            <person name="Gustincich S."/>
            <person name="Harbers M."/>
            <person name="Hayashi Y."/>
            <person name="Hensch T.K."/>
            <person name="Hirokawa N."/>
            <person name="Hill D."/>
            <person name="Huminiecki L."/>
            <person name="Iacono M."/>
            <person name="Ikeo K."/>
            <person name="Iwama A."/>
            <person name="Ishikawa T."/>
            <person name="Jakt M."/>
            <person name="Kanapin A."/>
            <person name="Katoh M."/>
            <person name="Kawasawa Y."/>
            <person name="Kelso J."/>
            <person name="Kitamura H."/>
            <person name="Kitano H."/>
            <person name="Kollias G."/>
            <person name="Krishnan S.P."/>
            <person name="Kruger A."/>
            <person name="Kummerfeld S.K."/>
            <person name="Kurochkin I.V."/>
            <person name="Lareau L.F."/>
            <person name="Lazarevic D."/>
            <person name="Lipovich L."/>
            <person name="Liu J."/>
            <person name="Liuni S."/>
            <person name="McWilliam S."/>
            <person name="Madan Babu M."/>
            <person name="Madera M."/>
            <person name="Marchionni L."/>
            <person name="Matsuda H."/>
            <person name="Matsuzawa S."/>
            <person name="Miki H."/>
            <person name="Mignone F."/>
            <person name="Miyake S."/>
            <person name="Morris K."/>
            <person name="Mottagui-Tabar S."/>
            <person name="Mulder N."/>
            <person name="Nakano N."/>
            <person name="Nakauchi H."/>
            <person name="Ng P."/>
            <person name="Nilsson R."/>
            <person name="Nishiguchi S."/>
            <person name="Nishikawa S."/>
            <person name="Nori F."/>
            <person name="Ohara O."/>
            <person name="Okazaki Y."/>
            <person name="Orlando V."/>
            <person name="Pang K.C."/>
            <person name="Pavan W.J."/>
            <person name="Pavesi G."/>
            <person name="Pesole G."/>
            <person name="Petrovsky N."/>
            <person name="Piazza S."/>
            <person name="Reed J."/>
            <person name="Reid J.F."/>
            <person name="Ring B.Z."/>
            <person name="Ringwald M."/>
            <person name="Rost B."/>
            <person name="Ruan Y."/>
            <person name="Salzberg S.L."/>
            <person name="Sandelin A."/>
            <person name="Schneider C."/>
            <person name="Schoenbach C."/>
            <person name="Sekiguchi K."/>
            <person name="Semple C.A."/>
            <person name="Seno S."/>
            <person name="Sessa L."/>
            <person name="Sheng Y."/>
            <person name="Shibata Y."/>
            <person name="Shimada H."/>
            <person name="Shimada K."/>
            <person name="Silva D."/>
            <person name="Sinclair B."/>
            <person name="Sperling S."/>
            <person name="Stupka E."/>
            <person name="Sugiura K."/>
            <person name="Sultana R."/>
            <person name="Takenaka Y."/>
            <person name="Taki K."/>
            <person name="Tammoja K."/>
            <person name="Tan S.L."/>
            <person name="Tang S."/>
            <person name="Taylor M.S."/>
            <person name="Tegner J."/>
            <person name="Teichmann S.A."/>
            <person name="Ueda H.R."/>
            <person name="van Nimwegen E."/>
            <person name="Verardo R."/>
            <person name="Wei C.L."/>
            <person name="Yagi K."/>
            <person name="Yamanishi H."/>
            <person name="Zabarovsky E."/>
            <person name="Zhu S."/>
            <person name="Zimmer A."/>
            <person name="Hide W."/>
            <person name="Bult C."/>
            <person name="Grimmond S.M."/>
            <person name="Teasdale R.D."/>
            <person name="Liu E.T."/>
            <person name="Brusic V."/>
            <person name="Quackenbush J."/>
            <person name="Wahlestedt C."/>
            <person name="Mattick J.S."/>
            <person name="Hume D.A."/>
            <person name="Kai C."/>
            <person name="Sasaki D."/>
            <person name="Tomaru Y."/>
            <person name="Fukuda S."/>
            <person name="Kanamori-Katayama M."/>
            <person name="Suzuki M."/>
            <person name="Aoki J."/>
            <person name="Arakawa T."/>
            <person name="Iida J."/>
            <person name="Imamura K."/>
            <person name="Itoh M."/>
            <person name="Kato T."/>
            <person name="Kawaji H."/>
            <person name="Kawagashira N."/>
            <person name="Kawashima T."/>
            <person name="Kojima M."/>
            <person name="Kondo S."/>
            <person name="Konno H."/>
            <person name="Nakano K."/>
            <person name="Ninomiya N."/>
            <person name="Nishio T."/>
            <person name="Okada M."/>
            <person name="Plessy C."/>
            <person name="Shibata K."/>
            <person name="Shiraki T."/>
            <person name="Suzuki S."/>
            <person name="Tagami M."/>
            <person name="Waki K."/>
            <person name="Watahiki A."/>
            <person name="Okamura-Oho Y."/>
            <person name="Suzuki H."/>
            <person name="Kawai J."/>
            <person name="Hayashizaki Y."/>
        </authorList>
    </citation>
    <scope>NUCLEOTIDE SEQUENCE [LARGE SCALE MRNA]</scope>
    <source>
        <strain>C57BL/6J</strain>
        <tissue>Embryonic head</tissue>
        <tissue>Lung</tissue>
    </source>
</reference>
<reference key="2">
    <citation type="journal article" date="2004" name="Genome Res.">
        <title>The status, quality, and expansion of the NIH full-length cDNA project: the Mammalian Gene Collection (MGC).</title>
        <authorList>
            <consortium name="The MGC Project Team"/>
        </authorList>
    </citation>
    <scope>NUCLEOTIDE SEQUENCE [LARGE SCALE MRNA]</scope>
    <source>
        <strain>FVB/N</strain>
        <tissue>Mammary gland</tissue>
    </source>
</reference>
<reference key="3">
    <citation type="journal article" date="2004" name="Gene">
        <title>ARHGAP8 is a novel member of the RHOGAP family related to ARHGAP1/CDC42GAP/p50RHOGAP: mutation and expression analyses in colorectal and breast cancers.</title>
        <authorList>
            <person name="Johnstone C.N."/>
            <person name="Castellvi-Bel S."/>
            <person name="Chang L.M."/>
            <person name="Bessa X."/>
            <person name="Nakagawa H."/>
            <person name="Harada H."/>
            <person name="Sung R.K."/>
            <person name="Pique J.M."/>
            <person name="Castells A."/>
            <person name="Rustgi A.K."/>
        </authorList>
    </citation>
    <scope>TISSUE SPECIFICITY</scope>
</reference>
<sequence length="425" mass="48972">MAGLDPTLSTSHPFYDVARHGILQVAGDDRQGRRIFTFSCCRLPPLHQLNHQRLLEYLKYTLDQHVENDYTIVYFHYGLSSQNKPSLGWLQNTYKEFDRKYKKNLKALYVVHPTSLIKALWNIFKPLISHKFGKKVTYCSNLRELREHLQCDQLLIPPEVVRYDEKLQNLHKGQPPPPTKTPPPRPPLPTQQFGVSLQYLRDKNQGELIPPVLRWTVTYLREKGLRTEGLFRRSASAQTVRQVQRLYDQGKPVNFDDYGDMHLPAVILKTFLRELPQPLLTFQAYEQILGITSVESSLRVTHCRLILRSLPEHNYAVLRYLMGFLHEVSLESISNKMNSSNLACVFGLNLIWPSQGVASLSALVPLNLFTELLIEYYDKVFSCQEAPGEHTRDTVEVQQAGPVTKEFMKTGTPRASPYLSRLRIS</sequence>
<dbReference type="EMBL" id="AK014171">
    <property type="protein sequence ID" value="BAB29190.1"/>
    <property type="molecule type" value="mRNA"/>
</dbReference>
<dbReference type="EMBL" id="AK086816">
    <property type="protein sequence ID" value="BAC39750.1"/>
    <property type="molecule type" value="mRNA"/>
</dbReference>
<dbReference type="EMBL" id="BC005563">
    <property type="protein sequence ID" value="AAH05563.1"/>
    <property type="molecule type" value="mRNA"/>
</dbReference>
<dbReference type="EMBL" id="BC010306">
    <property type="protein sequence ID" value="AAH10306.2"/>
    <property type="status" value="ALT_INIT"/>
    <property type="molecule type" value="mRNA"/>
</dbReference>
<dbReference type="CCDS" id="CCDS27712.1"/>
<dbReference type="RefSeq" id="NP_001158099.1">
    <property type="nucleotide sequence ID" value="NM_001164627.1"/>
</dbReference>
<dbReference type="RefSeq" id="NP_001158100.1">
    <property type="nucleotide sequence ID" value="NM_001164628.1"/>
</dbReference>
<dbReference type="RefSeq" id="NP_001192263.1">
    <property type="nucleotide sequence ID" value="NM_001205334.1"/>
</dbReference>
<dbReference type="RefSeq" id="NP_082731.2">
    <property type="nucleotide sequence ID" value="NM_028455.4"/>
</dbReference>
<dbReference type="RefSeq" id="XP_006521533.1">
    <property type="nucleotide sequence ID" value="XM_006521470.3"/>
</dbReference>
<dbReference type="RefSeq" id="XP_006521534.1">
    <property type="nucleotide sequence ID" value="XM_006521471.4"/>
</dbReference>
<dbReference type="SMR" id="Q9CXP4"/>
<dbReference type="BioGRID" id="215811">
    <property type="interactions" value="9"/>
</dbReference>
<dbReference type="FunCoup" id="Q9CXP4">
    <property type="interactions" value="494"/>
</dbReference>
<dbReference type="IntAct" id="Q9CXP4">
    <property type="interactions" value="5"/>
</dbReference>
<dbReference type="STRING" id="10090.ENSMUSP00000132008"/>
<dbReference type="iPTMnet" id="Q9CXP4"/>
<dbReference type="PhosphoSitePlus" id="Q9CXP4"/>
<dbReference type="PaxDb" id="10090-ENSMUSP00000132008"/>
<dbReference type="ProteomicsDB" id="255258"/>
<dbReference type="DNASU" id="73167"/>
<dbReference type="Ensembl" id="ENSMUST00000006029.11">
    <property type="protein sequence ID" value="ENSMUSP00000006029.5"/>
    <property type="gene ID" value="ENSMUSG00000078954.11"/>
</dbReference>
<dbReference type="Ensembl" id="ENSMUST00000168811.2">
    <property type="protein sequence ID" value="ENSMUSP00000130977.2"/>
    <property type="gene ID" value="ENSMUSG00000078954.11"/>
</dbReference>
<dbReference type="GeneID" id="73167"/>
<dbReference type="KEGG" id="mmu:73167"/>
<dbReference type="UCSC" id="uc007xci.2">
    <property type="organism name" value="mouse"/>
</dbReference>
<dbReference type="AGR" id="MGI:1920417"/>
<dbReference type="CTD" id="23779"/>
<dbReference type="MGI" id="MGI:1920417">
    <property type="gene designation" value="Arhgap8"/>
</dbReference>
<dbReference type="VEuPathDB" id="HostDB:ENSMUSG00000078954"/>
<dbReference type="eggNOG" id="KOG4406">
    <property type="taxonomic scope" value="Eukaryota"/>
</dbReference>
<dbReference type="GeneTree" id="ENSGT00940000160758"/>
<dbReference type="HOGENOM" id="CLU_030214_1_0_1"/>
<dbReference type="InParanoid" id="Q9CXP4"/>
<dbReference type="OMA" id="WLQNAYK"/>
<dbReference type="OrthoDB" id="19923at2759"/>
<dbReference type="PhylomeDB" id="Q9CXP4"/>
<dbReference type="TreeFam" id="TF324164"/>
<dbReference type="Reactome" id="R-MMU-8980692">
    <property type="pathway name" value="RHOA GTPase cycle"/>
</dbReference>
<dbReference type="BioGRID-ORCS" id="73167">
    <property type="hits" value="2 hits in 78 CRISPR screens"/>
</dbReference>
<dbReference type="ChiTaRS" id="Prr5">
    <property type="organism name" value="mouse"/>
</dbReference>
<dbReference type="PRO" id="PR:Q9CXP4"/>
<dbReference type="Proteomes" id="UP000000589">
    <property type="component" value="Chromosome 15"/>
</dbReference>
<dbReference type="RNAct" id="Q9CXP4">
    <property type="molecule type" value="protein"/>
</dbReference>
<dbReference type="Bgee" id="ENSMUSG00000078954">
    <property type="expression patterns" value="Expressed in seminal vesicle and 106 other cell types or tissues"/>
</dbReference>
<dbReference type="GO" id="GO:0005096">
    <property type="term" value="F:GTPase activator activity"/>
    <property type="evidence" value="ECO:0007669"/>
    <property type="project" value="UniProtKB-KW"/>
</dbReference>
<dbReference type="GO" id="GO:0070374">
    <property type="term" value="P:positive regulation of ERK1 and ERK2 cascade"/>
    <property type="evidence" value="ECO:0007669"/>
    <property type="project" value="Ensembl"/>
</dbReference>
<dbReference type="GO" id="GO:0007165">
    <property type="term" value="P:signal transduction"/>
    <property type="evidence" value="ECO:0007669"/>
    <property type="project" value="InterPro"/>
</dbReference>
<dbReference type="CDD" id="cd00170">
    <property type="entry name" value="SEC14"/>
    <property type="match status" value="1"/>
</dbReference>
<dbReference type="FunFam" id="1.10.555.10:FF:000024">
    <property type="entry name" value="Rho GTPase-activating protein 1"/>
    <property type="match status" value="1"/>
</dbReference>
<dbReference type="FunFam" id="3.40.525.10:FF:000007">
    <property type="entry name" value="rho GTPase-activating protein 1"/>
    <property type="match status" value="1"/>
</dbReference>
<dbReference type="Gene3D" id="3.40.525.10">
    <property type="entry name" value="CRAL-TRIO lipid binding domain"/>
    <property type="match status" value="1"/>
</dbReference>
<dbReference type="Gene3D" id="1.10.555.10">
    <property type="entry name" value="Rho GTPase activation protein"/>
    <property type="match status" value="1"/>
</dbReference>
<dbReference type="InterPro" id="IPR001251">
    <property type="entry name" value="CRAL-TRIO_dom"/>
</dbReference>
<dbReference type="InterPro" id="IPR036865">
    <property type="entry name" value="CRAL-TRIO_dom_sf"/>
</dbReference>
<dbReference type="InterPro" id="IPR008936">
    <property type="entry name" value="Rho_GTPase_activation_prot"/>
</dbReference>
<dbReference type="InterPro" id="IPR000198">
    <property type="entry name" value="RhoGAP_dom"/>
</dbReference>
<dbReference type="PANTHER" id="PTHR45808">
    <property type="entry name" value="RHO GTPASE-ACTIVATING PROTEIN 68F"/>
    <property type="match status" value="1"/>
</dbReference>
<dbReference type="PANTHER" id="PTHR45808:SF4">
    <property type="entry name" value="RHO GTPASE-ACTIVATING PROTEIN 8"/>
    <property type="match status" value="1"/>
</dbReference>
<dbReference type="Pfam" id="PF13716">
    <property type="entry name" value="CRAL_TRIO_2"/>
    <property type="match status" value="1"/>
</dbReference>
<dbReference type="Pfam" id="PF00620">
    <property type="entry name" value="RhoGAP"/>
    <property type="match status" value="1"/>
</dbReference>
<dbReference type="SMART" id="SM00324">
    <property type="entry name" value="RhoGAP"/>
    <property type="match status" value="1"/>
</dbReference>
<dbReference type="SMART" id="SM00516">
    <property type="entry name" value="SEC14"/>
    <property type="match status" value="1"/>
</dbReference>
<dbReference type="SUPFAM" id="SSF52087">
    <property type="entry name" value="CRAL/TRIO domain"/>
    <property type="match status" value="1"/>
</dbReference>
<dbReference type="SUPFAM" id="SSF48350">
    <property type="entry name" value="GTPase activation domain, GAP"/>
    <property type="match status" value="1"/>
</dbReference>
<dbReference type="PROSITE" id="PS50191">
    <property type="entry name" value="CRAL_TRIO"/>
    <property type="match status" value="1"/>
</dbReference>
<dbReference type="PROSITE" id="PS50238">
    <property type="entry name" value="RHOGAP"/>
    <property type="match status" value="1"/>
</dbReference>
<comment type="function">
    <text evidence="1">GTPase activator for the Rho-type GTPases by converting them to an inactive GDP-bound state.</text>
</comment>
<comment type="tissue specificity">
    <text evidence="5">Highly expressed in skeletal muscle, lung and testis, and at lower levels in kidney, stomach and colon. Not detected in heart, liver, spleen, breast, brain, neonatal head or pancreas.</text>
</comment>
<comment type="sequence caution" evidence="6">
    <conflict type="erroneous initiation">
        <sequence resource="EMBL-CDS" id="AAH10306"/>
    </conflict>
</comment>
<accession>Q9CXP4</accession>
<accession>Q99JY7</accession>
<feature type="chain" id="PRO_0000056711" description="Rho GTPase-activating protein 8">
    <location>
        <begin position="1"/>
        <end position="425"/>
    </location>
</feature>
<feature type="domain" description="CRAL-TRIO" evidence="2">
    <location>
        <begin position="13"/>
        <end position="168"/>
    </location>
</feature>
<feature type="domain" description="Rho-GAP" evidence="3">
    <location>
        <begin position="195"/>
        <end position="381"/>
    </location>
</feature>
<feature type="region of interest" description="Disordered" evidence="4">
    <location>
        <begin position="169"/>
        <end position="192"/>
    </location>
</feature>
<feature type="compositionally biased region" description="Pro residues" evidence="4">
    <location>
        <begin position="174"/>
        <end position="189"/>
    </location>
</feature>
<feature type="site" description="Arginine finger; crucial for GTP hydrolysis by stabilizing the transition state" evidence="3">
    <location>
        <position position="232"/>
    </location>
</feature>
<feature type="sequence conflict" description="In Ref. 1; BAB29190." evidence="6" ref="1">
    <original>L</original>
    <variation>P</variation>
    <location>
        <position position="62"/>
    </location>
</feature>
<feature type="sequence conflict" description="In Ref. 1; BAB29190." evidence="6" ref="1">
    <original>QP</original>
    <variation>HT</variation>
    <location>
        <begin position="174"/>
        <end position="175"/>
    </location>
</feature>
<protein>
    <recommendedName>
        <fullName>Rho GTPase-activating protein 8</fullName>
    </recommendedName>
    <alternativeName>
        <fullName>Rho-type GTPase-activating protein 8</fullName>
    </alternativeName>
</protein>
<organism>
    <name type="scientific">Mus musculus</name>
    <name type="common">Mouse</name>
    <dbReference type="NCBI Taxonomy" id="10090"/>
    <lineage>
        <taxon>Eukaryota</taxon>
        <taxon>Metazoa</taxon>
        <taxon>Chordata</taxon>
        <taxon>Craniata</taxon>
        <taxon>Vertebrata</taxon>
        <taxon>Euteleostomi</taxon>
        <taxon>Mammalia</taxon>
        <taxon>Eutheria</taxon>
        <taxon>Euarchontoglires</taxon>
        <taxon>Glires</taxon>
        <taxon>Rodentia</taxon>
        <taxon>Myomorpha</taxon>
        <taxon>Muroidea</taxon>
        <taxon>Muridae</taxon>
        <taxon>Murinae</taxon>
        <taxon>Mus</taxon>
        <taxon>Mus</taxon>
    </lineage>
</organism>